<name>RL1_PROM2</name>
<accession>A8G2L0</accession>
<protein>
    <recommendedName>
        <fullName evidence="1">Large ribosomal subunit protein uL1</fullName>
    </recommendedName>
    <alternativeName>
        <fullName evidence="2">50S ribosomal protein L1</fullName>
    </alternativeName>
</protein>
<dbReference type="EMBL" id="CP000825">
    <property type="protein sequence ID" value="ABV49841.1"/>
    <property type="molecule type" value="Genomic_DNA"/>
</dbReference>
<dbReference type="RefSeq" id="WP_012007011.1">
    <property type="nucleotide sequence ID" value="NC_009840.1"/>
</dbReference>
<dbReference type="SMR" id="A8G2L0"/>
<dbReference type="STRING" id="93060.P9215_02221"/>
<dbReference type="KEGG" id="pmh:P9215_02221"/>
<dbReference type="eggNOG" id="COG0081">
    <property type="taxonomic scope" value="Bacteria"/>
</dbReference>
<dbReference type="HOGENOM" id="CLU_062853_0_0_3"/>
<dbReference type="OrthoDB" id="9803740at2"/>
<dbReference type="Proteomes" id="UP000002014">
    <property type="component" value="Chromosome"/>
</dbReference>
<dbReference type="GO" id="GO:0015934">
    <property type="term" value="C:large ribosomal subunit"/>
    <property type="evidence" value="ECO:0007669"/>
    <property type="project" value="InterPro"/>
</dbReference>
<dbReference type="GO" id="GO:0019843">
    <property type="term" value="F:rRNA binding"/>
    <property type="evidence" value="ECO:0007669"/>
    <property type="project" value="UniProtKB-UniRule"/>
</dbReference>
<dbReference type="GO" id="GO:0003735">
    <property type="term" value="F:structural constituent of ribosome"/>
    <property type="evidence" value="ECO:0007669"/>
    <property type="project" value="InterPro"/>
</dbReference>
<dbReference type="GO" id="GO:0000049">
    <property type="term" value="F:tRNA binding"/>
    <property type="evidence" value="ECO:0007669"/>
    <property type="project" value="UniProtKB-KW"/>
</dbReference>
<dbReference type="GO" id="GO:0006417">
    <property type="term" value="P:regulation of translation"/>
    <property type="evidence" value="ECO:0007669"/>
    <property type="project" value="UniProtKB-KW"/>
</dbReference>
<dbReference type="GO" id="GO:0006412">
    <property type="term" value="P:translation"/>
    <property type="evidence" value="ECO:0007669"/>
    <property type="project" value="UniProtKB-UniRule"/>
</dbReference>
<dbReference type="CDD" id="cd00403">
    <property type="entry name" value="Ribosomal_L1"/>
    <property type="match status" value="1"/>
</dbReference>
<dbReference type="FunFam" id="3.40.50.790:FF:000001">
    <property type="entry name" value="50S ribosomal protein L1"/>
    <property type="match status" value="1"/>
</dbReference>
<dbReference type="Gene3D" id="3.30.190.20">
    <property type="match status" value="1"/>
</dbReference>
<dbReference type="Gene3D" id="3.40.50.790">
    <property type="match status" value="1"/>
</dbReference>
<dbReference type="HAMAP" id="MF_01318_B">
    <property type="entry name" value="Ribosomal_uL1_B"/>
    <property type="match status" value="1"/>
</dbReference>
<dbReference type="InterPro" id="IPR005878">
    <property type="entry name" value="Ribosom_uL1_bac-type"/>
</dbReference>
<dbReference type="InterPro" id="IPR002143">
    <property type="entry name" value="Ribosomal_uL1"/>
</dbReference>
<dbReference type="InterPro" id="IPR023674">
    <property type="entry name" value="Ribosomal_uL1-like"/>
</dbReference>
<dbReference type="InterPro" id="IPR028364">
    <property type="entry name" value="Ribosomal_uL1/biogenesis"/>
</dbReference>
<dbReference type="InterPro" id="IPR016095">
    <property type="entry name" value="Ribosomal_uL1_3-a/b-sand"/>
</dbReference>
<dbReference type="InterPro" id="IPR023673">
    <property type="entry name" value="Ribosomal_uL1_CS"/>
</dbReference>
<dbReference type="NCBIfam" id="TIGR01169">
    <property type="entry name" value="rplA_bact"/>
    <property type="match status" value="1"/>
</dbReference>
<dbReference type="PANTHER" id="PTHR36427">
    <property type="entry name" value="54S RIBOSOMAL PROTEIN L1, MITOCHONDRIAL"/>
    <property type="match status" value="1"/>
</dbReference>
<dbReference type="PANTHER" id="PTHR36427:SF3">
    <property type="entry name" value="LARGE RIBOSOMAL SUBUNIT PROTEIN UL1M"/>
    <property type="match status" value="1"/>
</dbReference>
<dbReference type="Pfam" id="PF00687">
    <property type="entry name" value="Ribosomal_L1"/>
    <property type="match status" value="1"/>
</dbReference>
<dbReference type="PIRSF" id="PIRSF002155">
    <property type="entry name" value="Ribosomal_L1"/>
    <property type="match status" value="1"/>
</dbReference>
<dbReference type="SUPFAM" id="SSF56808">
    <property type="entry name" value="Ribosomal protein L1"/>
    <property type="match status" value="1"/>
</dbReference>
<dbReference type="PROSITE" id="PS01199">
    <property type="entry name" value="RIBOSOMAL_L1"/>
    <property type="match status" value="1"/>
</dbReference>
<keyword id="KW-0678">Repressor</keyword>
<keyword id="KW-0687">Ribonucleoprotein</keyword>
<keyword id="KW-0689">Ribosomal protein</keyword>
<keyword id="KW-0694">RNA-binding</keyword>
<keyword id="KW-0699">rRNA-binding</keyword>
<keyword id="KW-0810">Translation regulation</keyword>
<keyword id="KW-0820">tRNA-binding</keyword>
<organism>
    <name type="scientific">Prochlorococcus marinus (strain MIT 9215)</name>
    <dbReference type="NCBI Taxonomy" id="93060"/>
    <lineage>
        <taxon>Bacteria</taxon>
        <taxon>Bacillati</taxon>
        <taxon>Cyanobacteriota</taxon>
        <taxon>Cyanophyceae</taxon>
        <taxon>Synechococcales</taxon>
        <taxon>Prochlorococcaceae</taxon>
        <taxon>Prochlorococcus</taxon>
    </lineage>
</organism>
<reference key="1">
    <citation type="journal article" date="2007" name="PLoS Genet.">
        <title>Patterns and implications of gene gain and loss in the evolution of Prochlorococcus.</title>
        <authorList>
            <person name="Kettler G.C."/>
            <person name="Martiny A.C."/>
            <person name="Huang K."/>
            <person name="Zucker J."/>
            <person name="Coleman M.L."/>
            <person name="Rodrigue S."/>
            <person name="Chen F."/>
            <person name="Lapidus A."/>
            <person name="Ferriera S."/>
            <person name="Johnson J."/>
            <person name="Steglich C."/>
            <person name="Church G.M."/>
            <person name="Richardson P."/>
            <person name="Chisholm S.W."/>
        </authorList>
    </citation>
    <scope>NUCLEOTIDE SEQUENCE [LARGE SCALE GENOMIC DNA]</scope>
    <source>
        <strain>MIT 9215</strain>
    </source>
</reference>
<gene>
    <name evidence="1" type="primary">rplA</name>
    <name evidence="1" type="synonym">rpl1</name>
    <name type="ordered locus">P9215_02221</name>
</gene>
<sequence>MKKLSKRMASLSTKIEDRIYAPLEALSIIKENANAKFDETIEAHIRLGIDPKYTDQQLRTTVALPHGTGQSIRIAVITSGENVSKAKSAGADLFGEEDLVESINKGNMEFDLLIATPDMMPKVAKLGRVLGPRGLMPNPKAGTVTNDIGNAIKEFKAGKLEFRADKAGIVHVRFGKASFTKEALFENLKTLQESIDKNKPSGAKGKYWKSFYVTSTMGPSVQVDINAVQDYQAEG</sequence>
<feature type="chain" id="PRO_1000067531" description="Large ribosomal subunit protein uL1">
    <location>
        <begin position="1"/>
        <end position="235"/>
    </location>
</feature>
<evidence type="ECO:0000255" key="1">
    <source>
        <dbReference type="HAMAP-Rule" id="MF_01318"/>
    </source>
</evidence>
<evidence type="ECO:0000305" key="2"/>
<proteinExistence type="inferred from homology"/>
<comment type="function">
    <text evidence="1">Binds directly to 23S rRNA. The L1 stalk is quite mobile in the ribosome, and is involved in E site tRNA release.</text>
</comment>
<comment type="function">
    <text evidence="1">Protein L1 is also a translational repressor protein, it controls the translation of the L11 operon by binding to its mRNA.</text>
</comment>
<comment type="subunit">
    <text evidence="1">Part of the 50S ribosomal subunit.</text>
</comment>
<comment type="similarity">
    <text evidence="1">Belongs to the universal ribosomal protein uL1 family.</text>
</comment>